<proteinExistence type="inferred from homology"/>
<organism>
    <name type="scientific">Oryza sativa subsp. indica</name>
    <name type="common">Rice</name>
    <dbReference type="NCBI Taxonomy" id="39946"/>
    <lineage>
        <taxon>Eukaryota</taxon>
        <taxon>Viridiplantae</taxon>
        <taxon>Streptophyta</taxon>
        <taxon>Embryophyta</taxon>
        <taxon>Tracheophyta</taxon>
        <taxon>Spermatophyta</taxon>
        <taxon>Magnoliopsida</taxon>
        <taxon>Liliopsida</taxon>
        <taxon>Poales</taxon>
        <taxon>Poaceae</taxon>
        <taxon>BOP clade</taxon>
        <taxon>Oryzoideae</taxon>
        <taxon>Oryzeae</taxon>
        <taxon>Oryzinae</taxon>
        <taxon>Oryza</taxon>
        <taxon>Oryza sativa</taxon>
    </lineage>
</organism>
<name>ITPK2_ORYSI</name>
<gene>
    <name type="primary">ITPK2</name>
    <name evidence="5" type="ORF">OsI_10626</name>
</gene>
<accession>B8AJL9</accession>
<protein>
    <recommendedName>
        <fullName evidence="4">Inositol-tetrakisphosphate 1-kinase 2</fullName>
        <ecNumber evidence="4">2.7.1.134</ecNumber>
    </recommendedName>
    <alternativeName>
        <fullName evidence="4">Inositol 1,3,4-trisphosphate 5/6-kinase 2</fullName>
        <shortName evidence="4">Inositol-triphosphate 5/6-kinase 2</shortName>
        <shortName evidence="4">Ins(1,3,4)P(3) 5/6-kinase 2</shortName>
        <shortName evidence="4">OsITP5/6K-2</shortName>
        <shortName evidence="4">OsITPK2</shortName>
        <ecNumber evidence="4">2.7.1.159</ecNumber>
    </alternativeName>
</protein>
<reference key="1">
    <citation type="journal article" date="2005" name="PLoS Biol.">
        <title>The genomes of Oryza sativa: a history of duplications.</title>
        <authorList>
            <person name="Yu J."/>
            <person name="Wang J."/>
            <person name="Lin W."/>
            <person name="Li S."/>
            <person name="Li H."/>
            <person name="Zhou J."/>
            <person name="Ni P."/>
            <person name="Dong W."/>
            <person name="Hu S."/>
            <person name="Zeng C."/>
            <person name="Zhang J."/>
            <person name="Zhang Y."/>
            <person name="Li R."/>
            <person name="Xu Z."/>
            <person name="Li S."/>
            <person name="Li X."/>
            <person name="Zheng H."/>
            <person name="Cong L."/>
            <person name="Lin L."/>
            <person name="Yin J."/>
            <person name="Geng J."/>
            <person name="Li G."/>
            <person name="Shi J."/>
            <person name="Liu J."/>
            <person name="Lv H."/>
            <person name="Li J."/>
            <person name="Wang J."/>
            <person name="Deng Y."/>
            <person name="Ran L."/>
            <person name="Shi X."/>
            <person name="Wang X."/>
            <person name="Wu Q."/>
            <person name="Li C."/>
            <person name="Ren X."/>
            <person name="Wang J."/>
            <person name="Wang X."/>
            <person name="Li D."/>
            <person name="Liu D."/>
            <person name="Zhang X."/>
            <person name="Ji Z."/>
            <person name="Zhao W."/>
            <person name="Sun Y."/>
            <person name="Zhang Z."/>
            <person name="Bao J."/>
            <person name="Han Y."/>
            <person name="Dong L."/>
            <person name="Ji J."/>
            <person name="Chen P."/>
            <person name="Wu S."/>
            <person name="Liu J."/>
            <person name="Xiao Y."/>
            <person name="Bu D."/>
            <person name="Tan J."/>
            <person name="Yang L."/>
            <person name="Ye C."/>
            <person name="Zhang J."/>
            <person name="Xu J."/>
            <person name="Zhou Y."/>
            <person name="Yu Y."/>
            <person name="Zhang B."/>
            <person name="Zhuang S."/>
            <person name="Wei H."/>
            <person name="Liu B."/>
            <person name="Lei M."/>
            <person name="Yu H."/>
            <person name="Li Y."/>
            <person name="Xu H."/>
            <person name="Wei S."/>
            <person name="He X."/>
            <person name="Fang L."/>
            <person name="Zhang Z."/>
            <person name="Zhang Y."/>
            <person name="Huang X."/>
            <person name="Su Z."/>
            <person name="Tong W."/>
            <person name="Li J."/>
            <person name="Tong Z."/>
            <person name="Li S."/>
            <person name="Ye J."/>
            <person name="Wang L."/>
            <person name="Fang L."/>
            <person name="Lei T."/>
            <person name="Chen C.-S."/>
            <person name="Chen H.-C."/>
            <person name="Xu Z."/>
            <person name="Li H."/>
            <person name="Huang H."/>
            <person name="Zhang F."/>
            <person name="Xu H."/>
            <person name="Li N."/>
            <person name="Zhao C."/>
            <person name="Li S."/>
            <person name="Dong L."/>
            <person name="Huang Y."/>
            <person name="Li L."/>
            <person name="Xi Y."/>
            <person name="Qi Q."/>
            <person name="Li W."/>
            <person name="Zhang B."/>
            <person name="Hu W."/>
            <person name="Zhang Y."/>
            <person name="Tian X."/>
            <person name="Jiao Y."/>
            <person name="Liang X."/>
            <person name="Jin J."/>
            <person name="Gao L."/>
            <person name="Zheng W."/>
            <person name="Hao B."/>
            <person name="Liu S.-M."/>
            <person name="Wang W."/>
            <person name="Yuan L."/>
            <person name="Cao M."/>
            <person name="McDermott J."/>
            <person name="Samudrala R."/>
            <person name="Wang J."/>
            <person name="Wong G.K.-S."/>
            <person name="Yang H."/>
        </authorList>
    </citation>
    <scope>NUCLEOTIDE SEQUENCE [LARGE SCALE GENOMIC DNA]</scope>
    <source>
        <strain>cv. 93-11</strain>
    </source>
</reference>
<keyword id="KW-0067">ATP-binding</keyword>
<keyword id="KW-0418">Kinase</keyword>
<keyword id="KW-0460">Magnesium</keyword>
<keyword id="KW-0479">Metal-binding</keyword>
<keyword id="KW-0547">Nucleotide-binding</keyword>
<keyword id="KW-1185">Reference proteome</keyword>
<keyword id="KW-0808">Transferase</keyword>
<evidence type="ECO:0000250" key="1">
    <source>
        <dbReference type="UniProtKB" id="Q13572"/>
    </source>
</evidence>
<evidence type="ECO:0000250" key="2">
    <source>
        <dbReference type="UniProtKB" id="Q84Y01"/>
    </source>
</evidence>
<evidence type="ECO:0000250" key="3">
    <source>
        <dbReference type="UniProtKB" id="Q9XYQ1"/>
    </source>
</evidence>
<evidence type="ECO:0000305" key="4"/>
<evidence type="ECO:0000312" key="5">
    <source>
        <dbReference type="EMBL" id="EEC74810.1"/>
    </source>
</evidence>
<dbReference type="EC" id="2.7.1.134" evidence="4"/>
<dbReference type="EC" id="2.7.1.159" evidence="4"/>
<dbReference type="EMBL" id="CM000128">
    <property type="protein sequence ID" value="EEC74810.1"/>
    <property type="molecule type" value="Genomic_DNA"/>
</dbReference>
<dbReference type="SMR" id="B8AJL9"/>
<dbReference type="STRING" id="39946.B8AJL9"/>
<dbReference type="EnsemblPlants" id="BGIOSGA012174-TA">
    <property type="protein sequence ID" value="BGIOSGA012174-PA"/>
    <property type="gene ID" value="BGIOSGA012174"/>
</dbReference>
<dbReference type="EnsemblPlants" id="OsKYG_03g0009520.02">
    <property type="protein sequence ID" value="OsKYG_03g0009520.02"/>
    <property type="gene ID" value="OsKYG_03g0009520"/>
</dbReference>
<dbReference type="EnsemblPlants" id="OsLiXu_03g0009500.02">
    <property type="protein sequence ID" value="OsLiXu_03g0009500.02"/>
    <property type="gene ID" value="OsLiXu_03g0009500"/>
</dbReference>
<dbReference type="EnsemblPlants" id="OsMH63_03G009390_02">
    <property type="protein sequence ID" value="OsMH63_03G009390_02"/>
    <property type="gene ID" value="OsMH63_03G009390"/>
</dbReference>
<dbReference type="EnsemblPlants" id="OsPr106_03g0009430.02">
    <property type="protein sequence ID" value="OsPr106_03g0009430.02"/>
    <property type="gene ID" value="OsPr106_03g0009430"/>
</dbReference>
<dbReference type="EnsemblPlants" id="OsZS97_03G009280_01">
    <property type="protein sequence ID" value="OsZS97_03G009280_01"/>
    <property type="gene ID" value="OsZS97_03G009280"/>
</dbReference>
<dbReference type="Gramene" id="BGIOSGA012174-TA">
    <property type="protein sequence ID" value="BGIOSGA012174-PA"/>
    <property type="gene ID" value="BGIOSGA012174"/>
</dbReference>
<dbReference type="Gramene" id="OsKYG_03g0009520.02">
    <property type="protein sequence ID" value="OsKYG_03g0009520.02"/>
    <property type="gene ID" value="OsKYG_03g0009520"/>
</dbReference>
<dbReference type="Gramene" id="OsLiXu_03g0009500.02">
    <property type="protein sequence ID" value="OsLiXu_03g0009500.02"/>
    <property type="gene ID" value="OsLiXu_03g0009500"/>
</dbReference>
<dbReference type="Gramene" id="OsMH63_03G009390_02">
    <property type="protein sequence ID" value="OsMH63_03G009390_02"/>
    <property type="gene ID" value="OsMH63_03G009390"/>
</dbReference>
<dbReference type="Gramene" id="OsPr106_03g0009430.02">
    <property type="protein sequence ID" value="OsPr106_03g0009430.02"/>
    <property type="gene ID" value="OsPr106_03g0009430"/>
</dbReference>
<dbReference type="Gramene" id="OsZS97_03G009280_01">
    <property type="protein sequence ID" value="OsZS97_03G009280_01"/>
    <property type="gene ID" value="OsZS97_03G009280"/>
</dbReference>
<dbReference type="HOGENOM" id="CLU_041857_0_0_1"/>
<dbReference type="OMA" id="MKPREED"/>
<dbReference type="Proteomes" id="UP000007015">
    <property type="component" value="Chromosome 3"/>
</dbReference>
<dbReference type="GO" id="GO:0005737">
    <property type="term" value="C:cytoplasm"/>
    <property type="evidence" value="ECO:0007669"/>
    <property type="project" value="TreeGrafter"/>
</dbReference>
<dbReference type="GO" id="GO:0005524">
    <property type="term" value="F:ATP binding"/>
    <property type="evidence" value="ECO:0007669"/>
    <property type="project" value="UniProtKB-KW"/>
</dbReference>
<dbReference type="GO" id="GO:0052726">
    <property type="term" value="F:inositol-1,3,4-trisphosphate 5-kinase activity"/>
    <property type="evidence" value="ECO:0007669"/>
    <property type="project" value="InterPro"/>
</dbReference>
<dbReference type="GO" id="GO:0052725">
    <property type="term" value="F:inositol-1,3,4-trisphosphate 6-kinase activity"/>
    <property type="evidence" value="ECO:0007669"/>
    <property type="project" value="InterPro"/>
</dbReference>
<dbReference type="GO" id="GO:0047325">
    <property type="term" value="F:inositol-3,4,5,6-tetrakisphosphate 1-kinase activity"/>
    <property type="evidence" value="ECO:0007669"/>
    <property type="project" value="UniProtKB-EC"/>
</dbReference>
<dbReference type="GO" id="GO:0000287">
    <property type="term" value="F:magnesium ion binding"/>
    <property type="evidence" value="ECO:0007669"/>
    <property type="project" value="InterPro"/>
</dbReference>
<dbReference type="GO" id="GO:0032957">
    <property type="term" value="P:inositol trisphosphate metabolic process"/>
    <property type="evidence" value="ECO:0007669"/>
    <property type="project" value="InterPro"/>
</dbReference>
<dbReference type="GO" id="GO:0047484">
    <property type="term" value="P:regulation of response to osmotic stress"/>
    <property type="evidence" value="ECO:0007669"/>
    <property type="project" value="EnsemblPlants"/>
</dbReference>
<dbReference type="FunFam" id="3.30.1490.220:FF:000002">
    <property type="entry name" value="Inositol-tetrakisphosphate 1-kinase"/>
    <property type="match status" value="1"/>
</dbReference>
<dbReference type="FunFam" id="3.40.50.11370:FF:000002">
    <property type="entry name" value="Inositol-tetrakisphosphate 1-kinase"/>
    <property type="match status" value="1"/>
</dbReference>
<dbReference type="Gene3D" id="3.30.1490.220">
    <property type="match status" value="1"/>
</dbReference>
<dbReference type="Gene3D" id="3.40.50.11370">
    <property type="match status" value="1"/>
</dbReference>
<dbReference type="InterPro" id="IPR008656">
    <property type="entry name" value="Inositol_tetrakis-P_1-kinase"/>
</dbReference>
<dbReference type="InterPro" id="IPR040464">
    <property type="entry name" value="InsP(3)kin_ATP-grasp"/>
</dbReference>
<dbReference type="InterPro" id="IPR041429">
    <property type="entry name" value="ITPK1_N"/>
</dbReference>
<dbReference type="PANTHER" id="PTHR14217">
    <property type="entry name" value="INOSITOL-TETRAKISPHOSPHATE 1-KINASE"/>
    <property type="match status" value="1"/>
</dbReference>
<dbReference type="PANTHER" id="PTHR14217:SF7">
    <property type="entry name" value="INOSITOL-TETRAKISPHOSPHATE 1-KINASE 2"/>
    <property type="match status" value="1"/>
</dbReference>
<dbReference type="Pfam" id="PF05770">
    <property type="entry name" value="Ins134_P3_kin"/>
    <property type="match status" value="1"/>
</dbReference>
<dbReference type="Pfam" id="PF17927">
    <property type="entry name" value="Ins134_P3_kin_N"/>
    <property type="match status" value="1"/>
</dbReference>
<dbReference type="PIRSF" id="PIRSF038186">
    <property type="entry name" value="ITPK"/>
    <property type="match status" value="1"/>
</dbReference>
<dbReference type="SUPFAM" id="SSF56059">
    <property type="entry name" value="Glutathione synthetase ATP-binding domain-like"/>
    <property type="match status" value="1"/>
</dbReference>
<feature type="chain" id="PRO_0000431872" description="Inositol-tetrakisphosphate 1-kinase 2">
    <location>
        <begin position="1"/>
        <end position="349"/>
    </location>
</feature>
<feature type="binding site" evidence="3">
    <location>
        <position position="48"/>
    </location>
    <ligand>
        <name>1D-myo-inositol 1,3,4-trisphosphate</name>
        <dbReference type="ChEBI" id="CHEBI:58414"/>
    </ligand>
</feature>
<feature type="binding site" evidence="3">
    <location>
        <position position="90"/>
    </location>
    <ligand>
        <name>1D-myo-inositol 1,3,4-trisphosphate</name>
        <dbReference type="ChEBI" id="CHEBI:58414"/>
    </ligand>
</feature>
<feature type="binding site" evidence="1">
    <location>
        <position position="125"/>
    </location>
    <ligand>
        <name>ATP</name>
        <dbReference type="ChEBI" id="CHEBI:30616"/>
    </ligand>
</feature>
<feature type="binding site" evidence="1">
    <location>
        <position position="175"/>
    </location>
    <ligand>
        <name>ATP</name>
        <dbReference type="ChEBI" id="CHEBI:30616"/>
    </ligand>
</feature>
<feature type="binding site" evidence="3">
    <location>
        <position position="186"/>
    </location>
    <ligand>
        <name>1D-myo-inositol 1,3,4-trisphosphate</name>
        <dbReference type="ChEBI" id="CHEBI:58414"/>
    </ligand>
</feature>
<feature type="binding site" evidence="1">
    <location>
        <begin position="207"/>
        <end position="218"/>
    </location>
    <ligand>
        <name>ATP</name>
        <dbReference type="ChEBI" id="CHEBI:30616"/>
    </ligand>
</feature>
<feature type="binding site" evidence="3">
    <location>
        <position position="218"/>
    </location>
    <ligand>
        <name>1D-myo-inositol 1,3,4-trisphosphate</name>
        <dbReference type="ChEBI" id="CHEBI:58414"/>
    </ligand>
</feature>
<feature type="binding site" evidence="1">
    <location>
        <position position="233"/>
    </location>
    <ligand>
        <name>ATP</name>
        <dbReference type="ChEBI" id="CHEBI:30616"/>
    </ligand>
</feature>
<feature type="binding site" evidence="1">
    <location>
        <position position="298"/>
    </location>
    <ligand>
        <name>Mg(2+)</name>
        <dbReference type="ChEBI" id="CHEBI:18420"/>
        <label>1</label>
    </ligand>
</feature>
<feature type="binding site" evidence="1">
    <location>
        <position position="313"/>
    </location>
    <ligand>
        <name>Mg(2+)</name>
        <dbReference type="ChEBI" id="CHEBI:18420"/>
        <label>1</label>
    </ligand>
</feature>
<feature type="binding site" evidence="1">
    <location>
        <position position="313"/>
    </location>
    <ligand>
        <name>Mg(2+)</name>
        <dbReference type="ChEBI" id="CHEBI:18420"/>
        <label>2</label>
    </ligand>
</feature>
<feature type="binding site" evidence="3">
    <location>
        <position position="315"/>
    </location>
    <ligand>
        <name>1D-myo-inositol 1,3,4-trisphosphate</name>
        <dbReference type="ChEBI" id="CHEBI:58414"/>
    </ligand>
</feature>
<feature type="binding site" evidence="1">
    <location>
        <position position="315"/>
    </location>
    <ligand>
        <name>Mg(2+)</name>
        <dbReference type="ChEBI" id="CHEBI:18420"/>
        <label>2</label>
    </ligand>
</feature>
<comment type="function">
    <text evidence="2">Kinase that can phosphorylate various inositol polyphosphate such as Ins(3,4,5,6)P4 or Ins(1,3,4)P3 and participates in phytic acid biosynthesis in developing seeds. Phytic acid is the primary storage form of phosphorus in cereal grains and other plant seeds.</text>
</comment>
<comment type="catalytic activity">
    <reaction evidence="4">
        <text>1D-myo-inositol 3,4,5,6-tetrakisphosphate + ATP = 1D-myo-inositol 1,3,4,5,6-pentakisphosphate + ADP + H(+)</text>
        <dbReference type="Rhea" id="RHEA:12452"/>
        <dbReference type="ChEBI" id="CHEBI:15378"/>
        <dbReference type="ChEBI" id="CHEBI:30616"/>
        <dbReference type="ChEBI" id="CHEBI:57539"/>
        <dbReference type="ChEBI" id="CHEBI:57733"/>
        <dbReference type="ChEBI" id="CHEBI:456216"/>
        <dbReference type="EC" id="2.7.1.134"/>
    </reaction>
</comment>
<comment type="catalytic activity">
    <reaction evidence="4">
        <text>1D-myo-inositol 1,3,4-trisphosphate + ATP = 1D-myo-inositol 1,3,4,5-tetrakisphosphate + ADP + H(+)</text>
        <dbReference type="Rhea" id="RHEA:13253"/>
        <dbReference type="ChEBI" id="CHEBI:15378"/>
        <dbReference type="ChEBI" id="CHEBI:30616"/>
        <dbReference type="ChEBI" id="CHEBI:57895"/>
        <dbReference type="ChEBI" id="CHEBI:58414"/>
        <dbReference type="ChEBI" id="CHEBI:456216"/>
        <dbReference type="EC" id="2.7.1.159"/>
    </reaction>
</comment>
<comment type="catalytic activity">
    <reaction evidence="4">
        <text>1D-myo-inositol 1,3,4-trisphosphate + ATP = 1D-myo-inositol 1,3,4,6-tetrakisphosphate + ADP + H(+)</text>
        <dbReference type="Rhea" id="RHEA:20940"/>
        <dbReference type="ChEBI" id="CHEBI:15378"/>
        <dbReference type="ChEBI" id="CHEBI:30616"/>
        <dbReference type="ChEBI" id="CHEBI:57660"/>
        <dbReference type="ChEBI" id="CHEBI:58414"/>
        <dbReference type="ChEBI" id="CHEBI:456216"/>
        <dbReference type="EC" id="2.7.1.159"/>
    </reaction>
</comment>
<comment type="cofactor">
    <cofactor evidence="1">
        <name>Mg(2+)</name>
        <dbReference type="ChEBI" id="CHEBI:18420"/>
    </cofactor>
    <text evidence="1">Binds 2 magnesium ions per subunit.</text>
</comment>
<comment type="subunit">
    <text evidence="1">Monomer.</text>
</comment>
<comment type="similarity">
    <text evidence="4">Belongs to the ITPK1 family.</text>
</comment>
<sequence length="349" mass="38800">MRLHGEVSFDEDEEEVVMVPAAALSSSPLNGGAVPVTRLVVGYALTKKKVKSFLQPNLLLLARKKGINLVAIDDTRPLAEQGPFDVILHKITSKEWQQVLEDYHEEHPEVTVLDPPNAINHLNNRQSMLAEVSDLNLSSFYGEVCTPRQLVIMRDPSSIPTAVAMAGLTLPLVAKPLVVDGTSKSHELSLAYDEASLSMLDPPLVLQEFVNHGGILFKVYIIGETIQVVRRFSLPDVNTYDLLNNVGVYRFPRVSCAAASADHADLDPHISELPPRPLLEKLGKELRGRLGLRLFNIDMIRELGTKDRYYIIDINYFPGFGKMPGYEHIFTDFLLNLAQSKYKKCLSGG</sequence>